<name>WAPB_AUSSU</name>
<dbReference type="EMBL" id="EU401830">
    <property type="protein sequence ID" value="ACC77779.1"/>
    <property type="molecule type" value="Genomic_DNA"/>
</dbReference>
<dbReference type="SMR" id="B5L5P2"/>
<dbReference type="GO" id="GO:0005576">
    <property type="term" value="C:extracellular region"/>
    <property type="evidence" value="ECO:0000250"/>
    <property type="project" value="UniProtKB"/>
</dbReference>
<dbReference type="GO" id="GO:0005615">
    <property type="term" value="C:extracellular space"/>
    <property type="evidence" value="ECO:0007669"/>
    <property type="project" value="TreeGrafter"/>
</dbReference>
<dbReference type="GO" id="GO:0004867">
    <property type="term" value="F:serine-type endopeptidase inhibitor activity"/>
    <property type="evidence" value="ECO:0007669"/>
    <property type="project" value="TreeGrafter"/>
</dbReference>
<dbReference type="GO" id="GO:0019731">
    <property type="term" value="P:antibacterial humoral response"/>
    <property type="evidence" value="ECO:0007669"/>
    <property type="project" value="TreeGrafter"/>
</dbReference>
<dbReference type="GO" id="GO:0045087">
    <property type="term" value="P:innate immune response"/>
    <property type="evidence" value="ECO:0007669"/>
    <property type="project" value="TreeGrafter"/>
</dbReference>
<dbReference type="GO" id="GO:0044278">
    <property type="term" value="P:venom-mediated disruption of cell wall in another organism"/>
    <property type="evidence" value="ECO:0000250"/>
    <property type="project" value="UniProtKB"/>
</dbReference>
<dbReference type="Gene3D" id="4.10.75.10">
    <property type="entry name" value="Elafin-like"/>
    <property type="match status" value="1"/>
</dbReference>
<dbReference type="InterPro" id="IPR036645">
    <property type="entry name" value="Elafin-like_sf"/>
</dbReference>
<dbReference type="InterPro" id="IPR008197">
    <property type="entry name" value="WAP_dom"/>
</dbReference>
<dbReference type="InterPro" id="IPR050514">
    <property type="entry name" value="WAP_four-disulfide_core"/>
</dbReference>
<dbReference type="PANTHER" id="PTHR19441:SF44">
    <property type="entry name" value="ANTILEUKOPROTEINASE"/>
    <property type="match status" value="1"/>
</dbReference>
<dbReference type="PANTHER" id="PTHR19441">
    <property type="entry name" value="WHEY ACDIC PROTEIN WAP"/>
    <property type="match status" value="1"/>
</dbReference>
<dbReference type="Pfam" id="PF00095">
    <property type="entry name" value="WAP"/>
    <property type="match status" value="1"/>
</dbReference>
<dbReference type="PRINTS" id="PR00003">
    <property type="entry name" value="4DISULPHCORE"/>
</dbReference>
<dbReference type="SMART" id="SM00217">
    <property type="entry name" value="WAP"/>
    <property type="match status" value="1"/>
</dbReference>
<dbReference type="SUPFAM" id="SSF57256">
    <property type="entry name" value="Elafin-like"/>
    <property type="match status" value="1"/>
</dbReference>
<dbReference type="PROSITE" id="PS51390">
    <property type="entry name" value="WAP"/>
    <property type="match status" value="1"/>
</dbReference>
<protein>
    <recommendedName>
        <fullName evidence="4">Supwaprin-b</fullName>
    </recommendedName>
</protein>
<feature type="signal peptide" evidence="2">
    <location>
        <begin position="1"/>
        <end position="24"/>
    </location>
</feature>
<feature type="chain" id="PRO_5000395630" description="Supwaprin-b">
    <location>
        <begin position="25"/>
        <end position="75"/>
    </location>
</feature>
<feature type="domain" description="WAP" evidence="3">
    <location>
        <begin position="27"/>
        <end position="72"/>
    </location>
</feature>
<feature type="disulfide bond" evidence="3">
    <location>
        <begin position="34"/>
        <end position="60"/>
    </location>
</feature>
<feature type="disulfide bond" evidence="3">
    <location>
        <begin position="43"/>
        <end position="64"/>
    </location>
</feature>
<feature type="disulfide bond" evidence="3">
    <location>
        <begin position="47"/>
        <end position="59"/>
    </location>
</feature>
<feature type="disulfide bond" evidence="3">
    <location>
        <begin position="53"/>
        <end position="68"/>
    </location>
</feature>
<sequence>MSSGGLLLLLGLLTLWAELIPVSGQDHPKKPGLCPPRPQKPPCVRECKNDWSCPGEQKCCRYGCIFECRDPIFVK</sequence>
<keyword id="KW-0044">Antibiotic</keyword>
<keyword id="KW-0929">Antimicrobial</keyword>
<keyword id="KW-1015">Disulfide bond</keyword>
<keyword id="KW-0964">Secreted</keyword>
<keyword id="KW-0732">Signal</keyword>
<evidence type="ECO:0000250" key="1">
    <source>
        <dbReference type="UniProtKB" id="P83952"/>
    </source>
</evidence>
<evidence type="ECO:0000255" key="2"/>
<evidence type="ECO:0000255" key="3">
    <source>
        <dbReference type="PROSITE-ProRule" id="PRU00722"/>
    </source>
</evidence>
<evidence type="ECO:0000303" key="4">
    <source>
    </source>
</evidence>
<evidence type="ECO:0000305" key="5"/>
<evidence type="ECO:0000305" key="6">
    <source>
    </source>
</evidence>
<organism>
    <name type="scientific">Austrelaps superbus</name>
    <name type="common">Lowland copperhead snake</name>
    <name type="synonym">Hoplocephalus superbus</name>
    <dbReference type="NCBI Taxonomy" id="29156"/>
    <lineage>
        <taxon>Eukaryota</taxon>
        <taxon>Metazoa</taxon>
        <taxon>Chordata</taxon>
        <taxon>Craniata</taxon>
        <taxon>Vertebrata</taxon>
        <taxon>Euteleostomi</taxon>
        <taxon>Lepidosauria</taxon>
        <taxon>Squamata</taxon>
        <taxon>Bifurcata</taxon>
        <taxon>Unidentata</taxon>
        <taxon>Episquamata</taxon>
        <taxon>Toxicofera</taxon>
        <taxon>Serpentes</taxon>
        <taxon>Colubroidea</taxon>
        <taxon>Elapidae</taxon>
        <taxon>Hydrophiinae</taxon>
        <taxon>Austrelaps</taxon>
    </lineage>
</organism>
<proteinExistence type="inferred from homology"/>
<comment type="function">
    <text evidence="1">Damages membranes of susceptible bacteria. Has no hemolytic activity. Not toxic to mice. Does not inhibit the proteinases elastase and cathepsin G.</text>
</comment>
<comment type="subcellular location">
    <subcellularLocation>
        <location evidence="6">Secreted</location>
    </subcellularLocation>
</comment>
<comment type="tissue specificity">
    <text evidence="6">Expressed by the venom gland.</text>
</comment>
<comment type="similarity">
    <text evidence="5">Belongs to the venom waprin family.</text>
</comment>
<reference key="1">
    <citation type="journal article" date="2008" name="Cell. Mol. Life Sci.">
        <title>Common evolution of waprin and Kunitz-like toxin families in Australian venomous snakes.</title>
        <authorList>
            <person name="St Pierre L."/>
            <person name="Earl S.T."/>
            <person name="Filippovich I."/>
            <person name="Sorokina N."/>
            <person name="Masci P.P."/>
            <person name="De Jersey J."/>
            <person name="Lavin M.F."/>
        </authorList>
    </citation>
    <scope>NUCLEOTIDE SEQUENCE [GENOMIC DNA]</scope>
    <source>
        <tissue>Venom gland</tissue>
    </source>
</reference>
<accession>B5L5P2</accession>